<sequence length="416" mass="47504">MQYMKSLAHPDEFLSLLKIGYTESFKPKSQLKENLGNKEWCYELLNKTSRSFAFVINELEPSLKDAICIFYLVLRGLDTIEDDTTVELNTKLPVLTSFSEGLYQPGYKVFGYGMNNDEKNLVENFDKVVDVFLGLGDGYCTIIHDITRRMANGMSEFLQKSVVTLPEWDLYCHYVAGLVGIGLSKIFHASGLESEWFATADDESNQMGLFLQKTNIIRDYLEDINEKRIFWPRDVWARYTLHLENFKEAKYQIPALHCLNDLITNALSHALIALDYMSRLKNPQVINFCAIPQVMAIGTLNACYNNYNVFTGVVKIRKGQRALIVDAIQSKGLTATYELFFKFANEMRHKVPPNDPSAKKTIQHLESIEKLCIEKLGYRPSGFNDFISYDWMAVTSLAVSSAFLIARHGPNFFSKL</sequence>
<name>FDFT_DICDI</name>
<organism>
    <name type="scientific">Dictyostelium discoideum</name>
    <name type="common">Social amoeba</name>
    <dbReference type="NCBI Taxonomy" id="44689"/>
    <lineage>
        <taxon>Eukaryota</taxon>
        <taxon>Amoebozoa</taxon>
        <taxon>Evosea</taxon>
        <taxon>Eumycetozoa</taxon>
        <taxon>Dictyostelia</taxon>
        <taxon>Dictyosteliales</taxon>
        <taxon>Dictyosteliaceae</taxon>
        <taxon>Dictyostelium</taxon>
    </lineage>
</organism>
<gene>
    <name type="primary">fdfT</name>
    <name type="ORF">DDB_G0292072</name>
</gene>
<protein>
    <recommendedName>
        <fullName>Squalene synthase</fullName>
        <shortName>SQS</shortName>
        <shortName>SS</shortName>
        <ecNumber>2.5.1.21</ecNumber>
    </recommendedName>
    <alternativeName>
        <fullName>FPP:FPP farnesyltransferase</fullName>
    </alternativeName>
    <alternativeName>
        <fullName>Farnesyl-diphosphate farnesyltransferase</fullName>
    </alternativeName>
</protein>
<proteinExistence type="inferred from homology"/>
<keyword id="KW-0152">Cholesterol biosynthesis</keyword>
<keyword id="KW-0153">Cholesterol metabolism</keyword>
<keyword id="KW-0256">Endoplasmic reticulum</keyword>
<keyword id="KW-0414">Isoprene biosynthesis</keyword>
<keyword id="KW-0444">Lipid biosynthesis</keyword>
<keyword id="KW-0443">Lipid metabolism</keyword>
<keyword id="KW-0460">Magnesium</keyword>
<keyword id="KW-0472">Membrane</keyword>
<keyword id="KW-0511">Multifunctional enzyme</keyword>
<keyword id="KW-0521">NADP</keyword>
<keyword id="KW-1185">Reference proteome</keyword>
<keyword id="KW-0752">Steroid biosynthesis</keyword>
<keyword id="KW-0753">Steroid metabolism</keyword>
<keyword id="KW-0756">Sterol biosynthesis</keyword>
<keyword id="KW-1207">Sterol metabolism</keyword>
<keyword id="KW-0808">Transferase</keyword>
<keyword id="KW-0812">Transmembrane</keyword>
<keyword id="KW-1133">Transmembrane helix</keyword>
<feature type="chain" id="PRO_0000327603" description="Squalene synthase">
    <location>
        <begin position="1"/>
        <end position="416"/>
    </location>
</feature>
<feature type="transmembrane region" description="Helical" evidence="2">
    <location>
        <begin position="285"/>
        <end position="304"/>
    </location>
</feature>
<feature type="transmembrane region" description="Helical" evidence="2">
    <location>
        <begin position="386"/>
        <end position="406"/>
    </location>
</feature>
<dbReference type="EC" id="2.5.1.21"/>
<dbReference type="EMBL" id="AAFI02000187">
    <property type="protein sequence ID" value="EAL61392.1"/>
    <property type="molecule type" value="Genomic_DNA"/>
</dbReference>
<dbReference type="RefSeq" id="XP_629811.1">
    <property type="nucleotide sequence ID" value="XM_629809.1"/>
</dbReference>
<dbReference type="SMR" id="Q54DR1"/>
<dbReference type="FunCoup" id="Q54DR1">
    <property type="interactions" value="100"/>
</dbReference>
<dbReference type="STRING" id="44689.Q54DR1"/>
<dbReference type="PaxDb" id="44689-DDB0231376"/>
<dbReference type="EnsemblProtists" id="EAL61392">
    <property type="protein sequence ID" value="EAL61392"/>
    <property type="gene ID" value="DDB_G0292072"/>
</dbReference>
<dbReference type="GeneID" id="8628492"/>
<dbReference type="KEGG" id="ddi:DDB_G0292072"/>
<dbReference type="dictyBase" id="DDB_G0292072">
    <property type="gene designation" value="fdfT"/>
</dbReference>
<dbReference type="VEuPathDB" id="AmoebaDB:DDB_G0292072"/>
<dbReference type="eggNOG" id="KOG1459">
    <property type="taxonomic scope" value="Eukaryota"/>
</dbReference>
<dbReference type="HOGENOM" id="CLU_031981_0_2_1"/>
<dbReference type="InParanoid" id="Q54DR1"/>
<dbReference type="OMA" id="GEACQLM"/>
<dbReference type="PhylomeDB" id="Q54DR1"/>
<dbReference type="Reactome" id="R-DDI-191273">
    <property type="pathway name" value="Cholesterol biosynthesis"/>
</dbReference>
<dbReference type="UniPathway" id="UPA00767">
    <property type="reaction ID" value="UER00751"/>
</dbReference>
<dbReference type="PRO" id="PR:Q54DR1"/>
<dbReference type="Proteomes" id="UP000002195">
    <property type="component" value="Chromosome 6"/>
</dbReference>
<dbReference type="GO" id="GO:0005789">
    <property type="term" value="C:endoplasmic reticulum membrane"/>
    <property type="evidence" value="ECO:0000318"/>
    <property type="project" value="GO_Central"/>
</dbReference>
<dbReference type="GO" id="GO:0051996">
    <property type="term" value="F:squalene synthase [NAD(P)H] activity"/>
    <property type="evidence" value="ECO:0000250"/>
    <property type="project" value="dictyBase"/>
</dbReference>
<dbReference type="GO" id="GO:0006695">
    <property type="term" value="P:cholesterol biosynthetic process"/>
    <property type="evidence" value="ECO:0000250"/>
    <property type="project" value="dictyBase"/>
</dbReference>
<dbReference type="GO" id="GO:0045338">
    <property type="term" value="P:farnesyl diphosphate metabolic process"/>
    <property type="evidence" value="ECO:0000318"/>
    <property type="project" value="GO_Central"/>
</dbReference>
<dbReference type="GO" id="GO:0008299">
    <property type="term" value="P:isoprenoid biosynthetic process"/>
    <property type="evidence" value="ECO:0007669"/>
    <property type="project" value="UniProtKB-KW"/>
</dbReference>
<dbReference type="CDD" id="cd00683">
    <property type="entry name" value="Trans_IPPS_HH"/>
    <property type="match status" value="1"/>
</dbReference>
<dbReference type="FunFam" id="1.10.600.10:FF:000023">
    <property type="entry name" value="Squalene synthase"/>
    <property type="match status" value="1"/>
</dbReference>
<dbReference type="Gene3D" id="1.10.600.10">
    <property type="entry name" value="Farnesyl Diphosphate Synthase"/>
    <property type="match status" value="1"/>
</dbReference>
<dbReference type="InterPro" id="IPR008949">
    <property type="entry name" value="Isoprenoid_synthase_dom_sf"/>
</dbReference>
<dbReference type="InterPro" id="IPR002060">
    <property type="entry name" value="Squ/phyt_synthse"/>
</dbReference>
<dbReference type="InterPro" id="IPR006449">
    <property type="entry name" value="Squal_synth-like"/>
</dbReference>
<dbReference type="InterPro" id="IPR019845">
    <property type="entry name" value="Squalene/phytoene_synthase_CS"/>
</dbReference>
<dbReference type="InterPro" id="IPR044844">
    <property type="entry name" value="Trans_IPPS_euk-type"/>
</dbReference>
<dbReference type="InterPro" id="IPR033904">
    <property type="entry name" value="Trans_IPPS_HH"/>
</dbReference>
<dbReference type="NCBIfam" id="TIGR01559">
    <property type="entry name" value="squal_synth"/>
    <property type="match status" value="1"/>
</dbReference>
<dbReference type="PANTHER" id="PTHR11626">
    <property type="entry name" value="FARNESYL-DIPHOSPHATE FARNESYLTRANSFERASE"/>
    <property type="match status" value="1"/>
</dbReference>
<dbReference type="PANTHER" id="PTHR11626:SF2">
    <property type="entry name" value="SQUALENE SYNTHASE"/>
    <property type="match status" value="1"/>
</dbReference>
<dbReference type="Pfam" id="PF00494">
    <property type="entry name" value="SQS_PSY"/>
    <property type="match status" value="1"/>
</dbReference>
<dbReference type="SFLD" id="SFLDS00005">
    <property type="entry name" value="Isoprenoid_Synthase_Type_I"/>
    <property type="match status" value="1"/>
</dbReference>
<dbReference type="SFLD" id="SFLDG01018">
    <property type="entry name" value="Squalene/Phytoene_Synthase_Lik"/>
    <property type="match status" value="1"/>
</dbReference>
<dbReference type="SUPFAM" id="SSF48576">
    <property type="entry name" value="Terpenoid synthases"/>
    <property type="match status" value="1"/>
</dbReference>
<dbReference type="PROSITE" id="PS01044">
    <property type="entry name" value="SQUALEN_PHYTOEN_SYN_1"/>
    <property type="match status" value="1"/>
</dbReference>
<dbReference type="PROSITE" id="PS01045">
    <property type="entry name" value="SQUALEN_PHYTOEN_SYN_2"/>
    <property type="match status" value="1"/>
</dbReference>
<comment type="catalytic activity">
    <reaction>
        <text>2 (2E,6E)-farnesyl diphosphate + NADPH + H(+) = squalene + 2 diphosphate + NADP(+)</text>
        <dbReference type="Rhea" id="RHEA:32295"/>
        <dbReference type="ChEBI" id="CHEBI:15378"/>
        <dbReference type="ChEBI" id="CHEBI:15440"/>
        <dbReference type="ChEBI" id="CHEBI:33019"/>
        <dbReference type="ChEBI" id="CHEBI:57783"/>
        <dbReference type="ChEBI" id="CHEBI:58349"/>
        <dbReference type="ChEBI" id="CHEBI:175763"/>
        <dbReference type="EC" id="2.5.1.21"/>
    </reaction>
</comment>
<comment type="catalytic activity">
    <reaction>
        <text>2 (2E,6E)-farnesyl diphosphate + NADH + H(+) = squalene + 2 diphosphate + NAD(+)</text>
        <dbReference type="Rhea" id="RHEA:32299"/>
        <dbReference type="ChEBI" id="CHEBI:15378"/>
        <dbReference type="ChEBI" id="CHEBI:15440"/>
        <dbReference type="ChEBI" id="CHEBI:33019"/>
        <dbReference type="ChEBI" id="CHEBI:57540"/>
        <dbReference type="ChEBI" id="CHEBI:57945"/>
        <dbReference type="ChEBI" id="CHEBI:175763"/>
        <dbReference type="EC" id="2.5.1.21"/>
    </reaction>
</comment>
<comment type="cofactor">
    <cofactor evidence="1">
        <name>Mg(2+)</name>
        <dbReference type="ChEBI" id="CHEBI:18420"/>
    </cofactor>
</comment>
<comment type="pathway">
    <text>Terpene metabolism; lanosterol biosynthesis; lanosterol from farnesyl diphosphate: step 1/3.</text>
</comment>
<comment type="subcellular location">
    <subcellularLocation>
        <location evidence="1">Endoplasmic reticulum membrane</location>
        <topology evidence="1">Multi-pass membrane protein</topology>
    </subcellularLocation>
</comment>
<comment type="similarity">
    <text evidence="3">Belongs to the phytoene/squalene synthase family.</text>
</comment>
<reference key="1">
    <citation type="journal article" date="2002" name="Nature">
        <title>Sequence and analysis of chromosome 2 of Dictyostelium discoideum.</title>
        <authorList>
            <person name="Gloeckner G."/>
            <person name="Eichinger L."/>
            <person name="Szafranski K."/>
            <person name="Pachebat J.A."/>
            <person name="Bankier A.T."/>
            <person name="Dear P.H."/>
            <person name="Lehmann R."/>
            <person name="Baumgart C."/>
            <person name="Parra G."/>
            <person name="Abril J.F."/>
            <person name="Guigo R."/>
            <person name="Kumpf K."/>
            <person name="Tunggal B."/>
            <person name="Cox E.C."/>
            <person name="Quail M.A."/>
            <person name="Platzer M."/>
            <person name="Rosenthal A."/>
            <person name="Noegel A.A."/>
        </authorList>
    </citation>
    <scope>NUCLEOTIDE SEQUENCE [LARGE SCALE GENOMIC DNA]</scope>
    <source>
        <strain>AX4</strain>
    </source>
</reference>
<reference key="2">
    <citation type="journal article" date="2005" name="Nature">
        <title>The genome of the social amoeba Dictyostelium discoideum.</title>
        <authorList>
            <person name="Eichinger L."/>
            <person name="Pachebat J.A."/>
            <person name="Gloeckner G."/>
            <person name="Rajandream M.A."/>
            <person name="Sucgang R."/>
            <person name="Berriman M."/>
            <person name="Song J."/>
            <person name="Olsen R."/>
            <person name="Szafranski K."/>
            <person name="Xu Q."/>
            <person name="Tunggal B."/>
            <person name="Kummerfeld S."/>
            <person name="Madera M."/>
            <person name="Konfortov B.A."/>
            <person name="Rivero F."/>
            <person name="Bankier A.T."/>
            <person name="Lehmann R."/>
            <person name="Hamlin N."/>
            <person name="Davies R."/>
            <person name="Gaudet P."/>
            <person name="Fey P."/>
            <person name="Pilcher K."/>
            <person name="Chen G."/>
            <person name="Saunders D."/>
            <person name="Sodergren E.J."/>
            <person name="Davis P."/>
            <person name="Kerhornou A."/>
            <person name="Nie X."/>
            <person name="Hall N."/>
            <person name="Anjard C."/>
            <person name="Hemphill L."/>
            <person name="Bason N."/>
            <person name="Farbrother P."/>
            <person name="Desany B."/>
            <person name="Just E."/>
            <person name="Morio T."/>
            <person name="Rost R."/>
            <person name="Churcher C.M."/>
            <person name="Cooper J."/>
            <person name="Haydock S."/>
            <person name="van Driessche N."/>
            <person name="Cronin A."/>
            <person name="Goodhead I."/>
            <person name="Muzny D.M."/>
            <person name="Mourier T."/>
            <person name="Pain A."/>
            <person name="Lu M."/>
            <person name="Harper D."/>
            <person name="Lindsay R."/>
            <person name="Hauser H."/>
            <person name="James K.D."/>
            <person name="Quiles M."/>
            <person name="Madan Babu M."/>
            <person name="Saito T."/>
            <person name="Buchrieser C."/>
            <person name="Wardroper A."/>
            <person name="Felder M."/>
            <person name="Thangavelu M."/>
            <person name="Johnson D."/>
            <person name="Knights A."/>
            <person name="Loulseged H."/>
            <person name="Mungall K.L."/>
            <person name="Oliver K."/>
            <person name="Price C."/>
            <person name="Quail M.A."/>
            <person name="Urushihara H."/>
            <person name="Hernandez J."/>
            <person name="Rabbinowitsch E."/>
            <person name="Steffen D."/>
            <person name="Sanders M."/>
            <person name="Ma J."/>
            <person name="Kohara Y."/>
            <person name="Sharp S."/>
            <person name="Simmonds M.N."/>
            <person name="Spiegler S."/>
            <person name="Tivey A."/>
            <person name="Sugano S."/>
            <person name="White B."/>
            <person name="Walker D."/>
            <person name="Woodward J.R."/>
            <person name="Winckler T."/>
            <person name="Tanaka Y."/>
            <person name="Shaulsky G."/>
            <person name="Schleicher M."/>
            <person name="Weinstock G.M."/>
            <person name="Rosenthal A."/>
            <person name="Cox E.C."/>
            <person name="Chisholm R.L."/>
            <person name="Gibbs R.A."/>
            <person name="Loomis W.F."/>
            <person name="Platzer M."/>
            <person name="Kay R.R."/>
            <person name="Williams J.G."/>
            <person name="Dear P.H."/>
            <person name="Noegel A.A."/>
            <person name="Barrell B.G."/>
            <person name="Kuspa A."/>
        </authorList>
    </citation>
    <scope>NUCLEOTIDE SEQUENCE [LARGE SCALE GENOMIC DNA]</scope>
    <source>
        <strain>AX4</strain>
    </source>
</reference>
<accession>Q54DR1</accession>
<evidence type="ECO:0000250" key="1"/>
<evidence type="ECO:0000255" key="2"/>
<evidence type="ECO:0000305" key="3"/>